<comment type="function">
    <text evidence="1">IGPS catalyzes the conversion of PRFAR and glutamine to IGP, AICAR and glutamate. The HisH subunit catalyzes the hydrolysis of glutamine to glutamate and ammonia as part of the synthesis of IGP and AICAR. The resulting ammonia molecule is channeled to the active site of HisF.</text>
</comment>
<comment type="catalytic activity">
    <reaction evidence="1">
        <text>5-[(5-phospho-1-deoxy-D-ribulos-1-ylimino)methylamino]-1-(5-phospho-beta-D-ribosyl)imidazole-4-carboxamide + L-glutamine = D-erythro-1-(imidazol-4-yl)glycerol 3-phosphate + 5-amino-1-(5-phospho-beta-D-ribosyl)imidazole-4-carboxamide + L-glutamate + H(+)</text>
        <dbReference type="Rhea" id="RHEA:24793"/>
        <dbReference type="ChEBI" id="CHEBI:15378"/>
        <dbReference type="ChEBI" id="CHEBI:29985"/>
        <dbReference type="ChEBI" id="CHEBI:58278"/>
        <dbReference type="ChEBI" id="CHEBI:58359"/>
        <dbReference type="ChEBI" id="CHEBI:58475"/>
        <dbReference type="ChEBI" id="CHEBI:58525"/>
        <dbReference type="EC" id="4.3.2.10"/>
    </reaction>
</comment>
<comment type="catalytic activity">
    <reaction evidence="1">
        <text>L-glutamine + H2O = L-glutamate + NH4(+)</text>
        <dbReference type="Rhea" id="RHEA:15889"/>
        <dbReference type="ChEBI" id="CHEBI:15377"/>
        <dbReference type="ChEBI" id="CHEBI:28938"/>
        <dbReference type="ChEBI" id="CHEBI:29985"/>
        <dbReference type="ChEBI" id="CHEBI:58359"/>
        <dbReference type="EC" id="3.5.1.2"/>
    </reaction>
</comment>
<comment type="pathway">
    <text evidence="1">Amino-acid biosynthesis; L-histidine biosynthesis; L-histidine from 5-phospho-alpha-D-ribose 1-diphosphate: step 5/9.</text>
</comment>
<comment type="subunit">
    <text evidence="1">Heterodimer of HisH and HisF.</text>
</comment>
<comment type="subcellular location">
    <subcellularLocation>
        <location evidence="1">Cytoplasm</location>
    </subcellularLocation>
</comment>
<evidence type="ECO:0000255" key="1">
    <source>
        <dbReference type="HAMAP-Rule" id="MF_00278"/>
    </source>
</evidence>
<accession>Q5KVC8</accession>
<protein>
    <recommendedName>
        <fullName evidence="1">Imidazole glycerol phosphate synthase subunit HisH</fullName>
        <ecNumber evidence="1">4.3.2.10</ecNumber>
    </recommendedName>
    <alternativeName>
        <fullName evidence="1">IGP synthase glutaminase subunit</fullName>
        <ecNumber evidence="1">3.5.1.2</ecNumber>
    </alternativeName>
    <alternativeName>
        <fullName evidence="1">IGP synthase subunit HisH</fullName>
    </alternativeName>
    <alternativeName>
        <fullName evidence="1">ImGP synthase subunit HisH</fullName>
        <shortName evidence="1">IGPS subunit HisH</shortName>
    </alternativeName>
</protein>
<name>HIS5_GEOKA</name>
<sequence length="211" mass="22824">MIGIIDYGMGNLYSVSKALERLGCPYVLSGDKEELEQARGLILPGVGSFRDAMHILNETGLAAFIRSAVENGTPLLGICLGMQLLFDESEENGPTKGLGLLRGRVVRFPGVTKTGEPYKVPHMGWNRLRFHRPSPLLRGVEEGHVYFVHSYYVIPGDEDVVLASSEYDVDVPAVVGRGCVFGTQFHPEKSGAVGMSILNNYVGIATGRGNG</sequence>
<keyword id="KW-0028">Amino-acid biosynthesis</keyword>
<keyword id="KW-0963">Cytoplasm</keyword>
<keyword id="KW-0315">Glutamine amidotransferase</keyword>
<keyword id="KW-0368">Histidine biosynthesis</keyword>
<keyword id="KW-0378">Hydrolase</keyword>
<keyword id="KW-0456">Lyase</keyword>
<keyword id="KW-1185">Reference proteome</keyword>
<organism>
    <name type="scientific">Geobacillus kaustophilus (strain HTA426)</name>
    <dbReference type="NCBI Taxonomy" id="235909"/>
    <lineage>
        <taxon>Bacteria</taxon>
        <taxon>Bacillati</taxon>
        <taxon>Bacillota</taxon>
        <taxon>Bacilli</taxon>
        <taxon>Bacillales</taxon>
        <taxon>Anoxybacillaceae</taxon>
        <taxon>Geobacillus</taxon>
        <taxon>Geobacillus thermoleovorans group</taxon>
    </lineage>
</organism>
<proteinExistence type="inferred from homology"/>
<feature type="chain" id="PRO_0000231723" description="Imidazole glycerol phosphate synthase subunit HisH">
    <location>
        <begin position="1"/>
        <end position="211"/>
    </location>
</feature>
<feature type="domain" description="Glutamine amidotransferase type-1" evidence="1">
    <location>
        <begin position="1"/>
        <end position="211"/>
    </location>
</feature>
<feature type="active site" description="Nucleophile" evidence="1">
    <location>
        <position position="79"/>
    </location>
</feature>
<feature type="active site" evidence="1">
    <location>
        <position position="186"/>
    </location>
</feature>
<feature type="active site" evidence="1">
    <location>
        <position position="188"/>
    </location>
</feature>
<reference key="1">
    <citation type="journal article" date="2004" name="Nucleic Acids Res.">
        <title>Thermoadaptation trait revealed by the genome sequence of thermophilic Geobacillus kaustophilus.</title>
        <authorList>
            <person name="Takami H."/>
            <person name="Takaki Y."/>
            <person name="Chee G.-J."/>
            <person name="Nishi S."/>
            <person name="Shimamura S."/>
            <person name="Suzuki H."/>
            <person name="Matsui S."/>
            <person name="Uchiyama I."/>
        </authorList>
    </citation>
    <scope>NUCLEOTIDE SEQUENCE [LARGE SCALE GENOMIC DNA]</scope>
    <source>
        <strain>HTA426</strain>
    </source>
</reference>
<dbReference type="EC" id="4.3.2.10" evidence="1"/>
<dbReference type="EC" id="3.5.1.2" evidence="1"/>
<dbReference type="EMBL" id="BA000043">
    <property type="protein sequence ID" value="BAD77358.1"/>
    <property type="molecule type" value="Genomic_DNA"/>
</dbReference>
<dbReference type="SMR" id="Q5KVC8"/>
<dbReference type="STRING" id="235909.GK3073"/>
<dbReference type="KEGG" id="gka:GK3073"/>
<dbReference type="eggNOG" id="COG0118">
    <property type="taxonomic scope" value="Bacteria"/>
</dbReference>
<dbReference type="HOGENOM" id="CLU_071837_2_2_9"/>
<dbReference type="UniPathway" id="UPA00031">
    <property type="reaction ID" value="UER00010"/>
</dbReference>
<dbReference type="Proteomes" id="UP000001172">
    <property type="component" value="Chromosome"/>
</dbReference>
<dbReference type="GO" id="GO:0005737">
    <property type="term" value="C:cytoplasm"/>
    <property type="evidence" value="ECO:0007669"/>
    <property type="project" value="UniProtKB-SubCell"/>
</dbReference>
<dbReference type="GO" id="GO:0004359">
    <property type="term" value="F:glutaminase activity"/>
    <property type="evidence" value="ECO:0007669"/>
    <property type="project" value="UniProtKB-EC"/>
</dbReference>
<dbReference type="GO" id="GO:0000107">
    <property type="term" value="F:imidazoleglycerol-phosphate synthase activity"/>
    <property type="evidence" value="ECO:0007669"/>
    <property type="project" value="UniProtKB-UniRule"/>
</dbReference>
<dbReference type="GO" id="GO:0016829">
    <property type="term" value="F:lyase activity"/>
    <property type="evidence" value="ECO:0007669"/>
    <property type="project" value="UniProtKB-KW"/>
</dbReference>
<dbReference type="GO" id="GO:0000105">
    <property type="term" value="P:L-histidine biosynthetic process"/>
    <property type="evidence" value="ECO:0007669"/>
    <property type="project" value="UniProtKB-UniRule"/>
</dbReference>
<dbReference type="CDD" id="cd01748">
    <property type="entry name" value="GATase1_IGP_Synthase"/>
    <property type="match status" value="1"/>
</dbReference>
<dbReference type="Gene3D" id="3.40.50.880">
    <property type="match status" value="1"/>
</dbReference>
<dbReference type="HAMAP" id="MF_00278">
    <property type="entry name" value="HisH"/>
    <property type="match status" value="1"/>
</dbReference>
<dbReference type="InterPro" id="IPR029062">
    <property type="entry name" value="Class_I_gatase-like"/>
</dbReference>
<dbReference type="InterPro" id="IPR017926">
    <property type="entry name" value="GATASE"/>
</dbReference>
<dbReference type="InterPro" id="IPR010139">
    <property type="entry name" value="Imidazole-glycPsynth_HisH"/>
</dbReference>
<dbReference type="NCBIfam" id="TIGR01855">
    <property type="entry name" value="IMP_synth_hisH"/>
    <property type="match status" value="1"/>
</dbReference>
<dbReference type="PANTHER" id="PTHR42701">
    <property type="entry name" value="IMIDAZOLE GLYCEROL PHOSPHATE SYNTHASE SUBUNIT HISH"/>
    <property type="match status" value="1"/>
</dbReference>
<dbReference type="PANTHER" id="PTHR42701:SF1">
    <property type="entry name" value="IMIDAZOLE GLYCEROL PHOSPHATE SYNTHASE SUBUNIT HISH"/>
    <property type="match status" value="1"/>
</dbReference>
<dbReference type="Pfam" id="PF00117">
    <property type="entry name" value="GATase"/>
    <property type="match status" value="1"/>
</dbReference>
<dbReference type="PIRSF" id="PIRSF000495">
    <property type="entry name" value="Amidotransf_hisH"/>
    <property type="match status" value="1"/>
</dbReference>
<dbReference type="SUPFAM" id="SSF52317">
    <property type="entry name" value="Class I glutamine amidotransferase-like"/>
    <property type="match status" value="1"/>
</dbReference>
<dbReference type="PROSITE" id="PS51273">
    <property type="entry name" value="GATASE_TYPE_1"/>
    <property type="match status" value="1"/>
</dbReference>
<gene>
    <name evidence="1" type="primary">hisH</name>
    <name type="ordered locus">GK3073</name>
</gene>